<comment type="similarity">
    <text evidence="1">Belongs to the UPF0216 family.</text>
</comment>
<organism>
    <name type="scientific">Methanopyrus kandleri (strain AV19 / DSM 6324 / JCM 9639 / NBRC 100938)</name>
    <dbReference type="NCBI Taxonomy" id="190192"/>
    <lineage>
        <taxon>Archaea</taxon>
        <taxon>Methanobacteriati</taxon>
        <taxon>Methanobacteriota</taxon>
        <taxon>Methanomada group</taxon>
        <taxon>Methanopyri</taxon>
        <taxon>Methanopyrales</taxon>
        <taxon>Methanopyraceae</taxon>
        <taxon>Methanopyrus</taxon>
    </lineage>
</organism>
<evidence type="ECO:0000255" key="1">
    <source>
        <dbReference type="HAMAP-Rule" id="MF_00585"/>
    </source>
</evidence>
<reference key="1">
    <citation type="journal article" date="2002" name="Proc. Natl. Acad. Sci. U.S.A.">
        <title>The complete genome of hyperthermophile Methanopyrus kandleri AV19 and monophyly of archaeal methanogens.</title>
        <authorList>
            <person name="Slesarev A.I."/>
            <person name="Mezhevaya K.V."/>
            <person name="Makarova K.S."/>
            <person name="Polushin N.N."/>
            <person name="Shcherbinina O.V."/>
            <person name="Shakhova V.V."/>
            <person name="Belova G.I."/>
            <person name="Aravind L."/>
            <person name="Natale D.A."/>
            <person name="Rogozin I.B."/>
            <person name="Tatusov R.L."/>
            <person name="Wolf Y.I."/>
            <person name="Stetter K.O."/>
            <person name="Malykh A.G."/>
            <person name="Koonin E.V."/>
            <person name="Kozyavkin S.A."/>
        </authorList>
    </citation>
    <scope>NUCLEOTIDE SEQUENCE [LARGE SCALE GENOMIC DNA]</scope>
    <source>
        <strain>AV19 / DSM 6324 / JCM 9639 / NBRC 100938</strain>
    </source>
</reference>
<protein>
    <recommendedName>
        <fullName evidence="1">UPF0216 protein MK1676</fullName>
    </recommendedName>
</protein>
<gene>
    <name type="ordered locus">MK1676</name>
</gene>
<sequence>MRDESRLDKYVIKEILRINRHLPRRRKTLEELLREERPHVVNRDGTKHYFDRDELERLADILPRYLHGRLKLPILIELGYSGAAVIRGKAEVRVVCEVLGEEWRFSQDRVELNMLDVRKLRREFPTATQYMFSTEYIMGRPKVERRG</sequence>
<dbReference type="EMBL" id="AE009439">
    <property type="protein sequence ID" value="AAM02889.1"/>
    <property type="molecule type" value="Genomic_DNA"/>
</dbReference>
<dbReference type="RefSeq" id="WP_011020044.1">
    <property type="nucleotide sequence ID" value="NC_003551.1"/>
</dbReference>
<dbReference type="SMR" id="Q8TUS7"/>
<dbReference type="STRING" id="190192.MK1676"/>
<dbReference type="PaxDb" id="190192-MK1676"/>
<dbReference type="EnsemblBacteria" id="AAM02889">
    <property type="protein sequence ID" value="AAM02889"/>
    <property type="gene ID" value="MK1676"/>
</dbReference>
<dbReference type="GeneID" id="1478271"/>
<dbReference type="KEGG" id="mka:MK1676"/>
<dbReference type="HOGENOM" id="CLU_146474_0_0_2"/>
<dbReference type="InParanoid" id="Q8TUS7"/>
<dbReference type="OrthoDB" id="18795at2157"/>
<dbReference type="Proteomes" id="UP000001826">
    <property type="component" value="Chromosome"/>
</dbReference>
<dbReference type="HAMAP" id="MF_00585">
    <property type="entry name" value="UPF0216"/>
    <property type="match status" value="1"/>
</dbReference>
<dbReference type="InterPro" id="IPR002746">
    <property type="entry name" value="UPF0216"/>
</dbReference>
<dbReference type="NCBIfam" id="NF003153">
    <property type="entry name" value="PRK04115.1"/>
    <property type="match status" value="1"/>
</dbReference>
<dbReference type="Pfam" id="PF01886">
    <property type="entry name" value="DUF61"/>
    <property type="match status" value="1"/>
</dbReference>
<dbReference type="PIRSF" id="PIRSF005264">
    <property type="entry name" value="UCP005264"/>
    <property type="match status" value="1"/>
</dbReference>
<accession>Q8TUS7</accession>
<name>Y1676_METKA</name>
<proteinExistence type="inferred from homology"/>
<keyword id="KW-1185">Reference proteome</keyword>
<feature type="chain" id="PRO_0000144225" description="UPF0216 protein MK1676">
    <location>
        <begin position="1"/>
        <end position="147"/>
    </location>
</feature>